<comment type="function">
    <text evidence="1">DNA-dependent RNA polymerase catalyzes the transcription of DNA into RNA using the four ribonucleoside triphosphates as substrates.</text>
</comment>
<comment type="catalytic activity">
    <reaction evidence="1">
        <text>RNA(n) + a ribonucleoside 5'-triphosphate = RNA(n+1) + diphosphate</text>
        <dbReference type="Rhea" id="RHEA:21248"/>
        <dbReference type="Rhea" id="RHEA-COMP:14527"/>
        <dbReference type="Rhea" id="RHEA-COMP:17342"/>
        <dbReference type="ChEBI" id="CHEBI:33019"/>
        <dbReference type="ChEBI" id="CHEBI:61557"/>
        <dbReference type="ChEBI" id="CHEBI:140395"/>
        <dbReference type="EC" id="2.7.7.6"/>
    </reaction>
</comment>
<comment type="cofactor">
    <cofactor evidence="1">
        <name>Mg(2+)</name>
        <dbReference type="ChEBI" id="CHEBI:18420"/>
    </cofactor>
    <text evidence="1">Binds 1 Mg(2+) ion per subunit.</text>
</comment>
<comment type="cofactor">
    <cofactor evidence="1">
        <name>Zn(2+)</name>
        <dbReference type="ChEBI" id="CHEBI:29105"/>
    </cofactor>
    <text evidence="1">Binds 2 Zn(2+) ions per subunit.</text>
</comment>
<comment type="subunit">
    <text evidence="1">The RNAP catalytic core consists of 2 alpha, 1 beta, 1 beta' and 1 omega subunit. When a sigma factor is associated with the core the holoenzyme is formed, which can initiate transcription.</text>
</comment>
<comment type="similarity">
    <text evidence="1">Belongs to the RNA polymerase beta' chain family.</text>
</comment>
<accession>Q2IXR9</accession>
<feature type="chain" id="PRO_0000240819" description="DNA-directed RNA polymerase subunit beta'">
    <location>
        <begin position="1"/>
        <end position="1400"/>
    </location>
</feature>
<feature type="region of interest" description="Disordered" evidence="2">
    <location>
        <begin position="1377"/>
        <end position="1400"/>
    </location>
</feature>
<feature type="binding site" evidence="1">
    <location>
        <position position="71"/>
    </location>
    <ligand>
        <name>Zn(2+)</name>
        <dbReference type="ChEBI" id="CHEBI:29105"/>
        <label>1</label>
    </ligand>
</feature>
<feature type="binding site" evidence="1">
    <location>
        <position position="73"/>
    </location>
    <ligand>
        <name>Zn(2+)</name>
        <dbReference type="ChEBI" id="CHEBI:29105"/>
        <label>1</label>
    </ligand>
</feature>
<feature type="binding site" evidence="1">
    <location>
        <position position="86"/>
    </location>
    <ligand>
        <name>Zn(2+)</name>
        <dbReference type="ChEBI" id="CHEBI:29105"/>
        <label>1</label>
    </ligand>
</feature>
<feature type="binding site" evidence="1">
    <location>
        <position position="89"/>
    </location>
    <ligand>
        <name>Zn(2+)</name>
        <dbReference type="ChEBI" id="CHEBI:29105"/>
        <label>1</label>
    </ligand>
</feature>
<feature type="binding site" evidence="1">
    <location>
        <position position="462"/>
    </location>
    <ligand>
        <name>Mg(2+)</name>
        <dbReference type="ChEBI" id="CHEBI:18420"/>
    </ligand>
</feature>
<feature type="binding site" evidence="1">
    <location>
        <position position="464"/>
    </location>
    <ligand>
        <name>Mg(2+)</name>
        <dbReference type="ChEBI" id="CHEBI:18420"/>
    </ligand>
</feature>
<feature type="binding site" evidence="1">
    <location>
        <position position="466"/>
    </location>
    <ligand>
        <name>Mg(2+)</name>
        <dbReference type="ChEBI" id="CHEBI:18420"/>
    </ligand>
</feature>
<feature type="binding site" evidence="1">
    <location>
        <position position="810"/>
    </location>
    <ligand>
        <name>Zn(2+)</name>
        <dbReference type="ChEBI" id="CHEBI:29105"/>
        <label>2</label>
    </ligand>
</feature>
<feature type="binding site" evidence="1">
    <location>
        <position position="884"/>
    </location>
    <ligand>
        <name>Zn(2+)</name>
        <dbReference type="ChEBI" id="CHEBI:29105"/>
        <label>2</label>
    </ligand>
</feature>
<feature type="binding site" evidence="1">
    <location>
        <position position="891"/>
    </location>
    <ligand>
        <name>Zn(2+)</name>
        <dbReference type="ChEBI" id="CHEBI:29105"/>
        <label>2</label>
    </ligand>
</feature>
<feature type="binding site" evidence="1">
    <location>
        <position position="894"/>
    </location>
    <ligand>
        <name>Zn(2+)</name>
        <dbReference type="ChEBI" id="CHEBI:29105"/>
        <label>2</label>
    </ligand>
</feature>
<evidence type="ECO:0000255" key="1">
    <source>
        <dbReference type="HAMAP-Rule" id="MF_01322"/>
    </source>
</evidence>
<evidence type="ECO:0000256" key="2">
    <source>
        <dbReference type="SAM" id="MobiDB-lite"/>
    </source>
</evidence>
<sequence length="1400" mass="156039">MNQEIMNLFNPTTPAQVFDQIRISIASPEKILSWSYGEIKKPETINYRTFKPERDGLFCARIFGPIKDYECLCGKYKRMKYKGIICEKCSVEVTLSRVRRERMGHIELAAPVAHIWFLKSLPSRIGQLLDMTLKDLERILYFEYYVVLEPGLTDLKERQLLSEEEYLRAQDQYGQDSFTAMIGAEAIRELLKGLELEKIDAQLRVEMAETDSDIKHKKLAKRLKIVEAFRFSGNKPEWMILTVVPVIPPDLRPLVPLDGGRFATSDLNDLYRRVINRNNRLKRLMELRAPDIIIRNEKRMLQEAVDALFDNGRRGRVITGANKRPLKSLADMLKGKQGRFRQNLLGKRVDYSGRSVIVVGPELKLHQCGLPKKMALELFKPFIYSRLDAKGLSTTVKQAKKLVEKERPEVWDILDEVIREHPVLLNRAPTLHRLGIQAFEPVLIEGKAIQLHPLVCAAFNADFDGDQMAVHVPLSLEAQLEARVLMMSTNNILHPANGQPIIVPSQDIVLGLYYLSILREGLPGEGKVFGDLAELEHALFSKVIHLHTKIKYRWDSLDDEGKPYQRLIETTAGRILLGQVLPKSVKLPFEVINKLMTKREISSVIDQVYRHCGQKETVIFCDRIMALGFFNAFKAGISFGKDDMVVPASKWKIVDTTRTLAKDFEQQYNDGLITHGEKYNKVVDAWSKATEEIAKEMMKEISAVRKNASGAETQVNSIYMMAHSGARGSPAQMRQLAGMRGLMAKPSGEIIETPIISNFKEGLSVLEYFNSTHGARKGLADTALKTANSGYLTRRLVDVAQDCIITQDDCGTSLGIKMRAIIDAGTVVASLGSRILGRTAGEDVRDPQTNEVIVKKGQLMEERDVEAIHQAGVQEVKIRSALTCELVNGICGKCYGRDLARGTPVNHGEAVGVIAAQSIGEPGTQLTMRTFHIGGAAQINEQSVIESNFEGKVVIKNKAIARNGENHSVAMVRNMVVAIVDPDGTERATHRIQYGARMHVDEGDTVKRGQRIAEWDPYSRPVLTEVEGTIDFEDLVEDQSISETLDESTGIAKRIVIDWRSTRGGADLRPAIVVKGKDGKVLKLARGGDARYMLSVDAILSVDVGAKVKPGDILARISTESAKTRDITGGLPRVAELFEARKPKDAAIIAEIAGTIRFGRDYKNKRRISIEPMDSEEEAREYLIPKGKHIHLQDGDIVEKGDFIVEGNPAPHDILAIKGIEELAAYLVNEIQEVYRLQGVLINDKHIEVIVRQMLQKVEITDQGETDMISGEQIDKIEFDQLNAKARDEGKKIATGTPVLLGITKASLQTRSFFSAASFQETTRVLTEAAVNGKVDPLEGLKENVIVGRLIPAGTGASMAKLREVAMKRDRMILDEREKQATIVPPAAPEAEPLALPPVE</sequence>
<dbReference type="EC" id="2.7.7.6" evidence="1"/>
<dbReference type="EMBL" id="CP000250">
    <property type="protein sequence ID" value="ABD06991.1"/>
    <property type="molecule type" value="Genomic_DNA"/>
</dbReference>
<dbReference type="RefSeq" id="WP_011441178.1">
    <property type="nucleotide sequence ID" value="NC_007778.1"/>
</dbReference>
<dbReference type="SMR" id="Q2IXR9"/>
<dbReference type="STRING" id="316058.RPB_2286"/>
<dbReference type="KEGG" id="rpb:RPB_2286"/>
<dbReference type="eggNOG" id="COG0086">
    <property type="taxonomic scope" value="Bacteria"/>
</dbReference>
<dbReference type="HOGENOM" id="CLU_000524_3_1_5"/>
<dbReference type="OrthoDB" id="9815296at2"/>
<dbReference type="Proteomes" id="UP000008809">
    <property type="component" value="Chromosome"/>
</dbReference>
<dbReference type="GO" id="GO:0000428">
    <property type="term" value="C:DNA-directed RNA polymerase complex"/>
    <property type="evidence" value="ECO:0007669"/>
    <property type="project" value="UniProtKB-KW"/>
</dbReference>
<dbReference type="GO" id="GO:0003677">
    <property type="term" value="F:DNA binding"/>
    <property type="evidence" value="ECO:0007669"/>
    <property type="project" value="UniProtKB-UniRule"/>
</dbReference>
<dbReference type="GO" id="GO:0003899">
    <property type="term" value="F:DNA-directed RNA polymerase activity"/>
    <property type="evidence" value="ECO:0007669"/>
    <property type="project" value="UniProtKB-UniRule"/>
</dbReference>
<dbReference type="GO" id="GO:0000287">
    <property type="term" value="F:magnesium ion binding"/>
    <property type="evidence" value="ECO:0007669"/>
    <property type="project" value="UniProtKB-UniRule"/>
</dbReference>
<dbReference type="GO" id="GO:0008270">
    <property type="term" value="F:zinc ion binding"/>
    <property type="evidence" value="ECO:0007669"/>
    <property type="project" value="UniProtKB-UniRule"/>
</dbReference>
<dbReference type="GO" id="GO:0006351">
    <property type="term" value="P:DNA-templated transcription"/>
    <property type="evidence" value="ECO:0007669"/>
    <property type="project" value="UniProtKB-UniRule"/>
</dbReference>
<dbReference type="CDD" id="cd02655">
    <property type="entry name" value="RNAP_beta'_C"/>
    <property type="match status" value="1"/>
</dbReference>
<dbReference type="CDD" id="cd01609">
    <property type="entry name" value="RNAP_beta'_N"/>
    <property type="match status" value="1"/>
</dbReference>
<dbReference type="Gene3D" id="1.10.132.30">
    <property type="match status" value="1"/>
</dbReference>
<dbReference type="Gene3D" id="1.10.150.390">
    <property type="match status" value="1"/>
</dbReference>
<dbReference type="Gene3D" id="1.10.1790.20">
    <property type="match status" value="1"/>
</dbReference>
<dbReference type="Gene3D" id="1.10.40.90">
    <property type="match status" value="1"/>
</dbReference>
<dbReference type="Gene3D" id="2.40.40.20">
    <property type="match status" value="1"/>
</dbReference>
<dbReference type="Gene3D" id="2.40.50.100">
    <property type="match status" value="3"/>
</dbReference>
<dbReference type="Gene3D" id="4.10.860.120">
    <property type="entry name" value="RNA polymerase II, clamp domain"/>
    <property type="match status" value="1"/>
</dbReference>
<dbReference type="Gene3D" id="1.10.274.100">
    <property type="entry name" value="RNA polymerase Rpb1, domain 3"/>
    <property type="match status" value="2"/>
</dbReference>
<dbReference type="HAMAP" id="MF_01322">
    <property type="entry name" value="RNApol_bact_RpoC"/>
    <property type="match status" value="1"/>
</dbReference>
<dbReference type="InterPro" id="IPR045867">
    <property type="entry name" value="DNA-dir_RpoC_beta_prime"/>
</dbReference>
<dbReference type="InterPro" id="IPR012754">
    <property type="entry name" value="DNA-dir_RpoC_beta_prime_bact"/>
</dbReference>
<dbReference type="InterPro" id="IPR000722">
    <property type="entry name" value="RNA_pol_asu"/>
</dbReference>
<dbReference type="InterPro" id="IPR006592">
    <property type="entry name" value="RNA_pol_N"/>
</dbReference>
<dbReference type="InterPro" id="IPR007080">
    <property type="entry name" value="RNA_pol_Rpb1_1"/>
</dbReference>
<dbReference type="InterPro" id="IPR007066">
    <property type="entry name" value="RNA_pol_Rpb1_3"/>
</dbReference>
<dbReference type="InterPro" id="IPR042102">
    <property type="entry name" value="RNA_pol_Rpb1_3_sf"/>
</dbReference>
<dbReference type="InterPro" id="IPR007083">
    <property type="entry name" value="RNA_pol_Rpb1_4"/>
</dbReference>
<dbReference type="InterPro" id="IPR007081">
    <property type="entry name" value="RNA_pol_Rpb1_5"/>
</dbReference>
<dbReference type="InterPro" id="IPR044893">
    <property type="entry name" value="RNA_pol_Rpb1_clamp_domain"/>
</dbReference>
<dbReference type="InterPro" id="IPR038120">
    <property type="entry name" value="Rpb1_funnel_sf"/>
</dbReference>
<dbReference type="NCBIfam" id="TIGR02386">
    <property type="entry name" value="rpoC_TIGR"/>
    <property type="match status" value="1"/>
</dbReference>
<dbReference type="PANTHER" id="PTHR19376">
    <property type="entry name" value="DNA-DIRECTED RNA POLYMERASE"/>
    <property type="match status" value="1"/>
</dbReference>
<dbReference type="PANTHER" id="PTHR19376:SF54">
    <property type="entry name" value="DNA-DIRECTED RNA POLYMERASE SUBUNIT BETA"/>
    <property type="match status" value="1"/>
</dbReference>
<dbReference type="Pfam" id="PF04997">
    <property type="entry name" value="RNA_pol_Rpb1_1"/>
    <property type="match status" value="1"/>
</dbReference>
<dbReference type="Pfam" id="PF00623">
    <property type="entry name" value="RNA_pol_Rpb1_2"/>
    <property type="match status" value="2"/>
</dbReference>
<dbReference type="Pfam" id="PF04983">
    <property type="entry name" value="RNA_pol_Rpb1_3"/>
    <property type="match status" value="1"/>
</dbReference>
<dbReference type="Pfam" id="PF05000">
    <property type="entry name" value="RNA_pol_Rpb1_4"/>
    <property type="match status" value="1"/>
</dbReference>
<dbReference type="Pfam" id="PF04998">
    <property type="entry name" value="RNA_pol_Rpb1_5"/>
    <property type="match status" value="1"/>
</dbReference>
<dbReference type="SMART" id="SM00663">
    <property type="entry name" value="RPOLA_N"/>
    <property type="match status" value="1"/>
</dbReference>
<dbReference type="SUPFAM" id="SSF64484">
    <property type="entry name" value="beta and beta-prime subunits of DNA dependent RNA-polymerase"/>
    <property type="match status" value="1"/>
</dbReference>
<keyword id="KW-0240">DNA-directed RNA polymerase</keyword>
<keyword id="KW-0460">Magnesium</keyword>
<keyword id="KW-0479">Metal-binding</keyword>
<keyword id="KW-0548">Nucleotidyltransferase</keyword>
<keyword id="KW-1185">Reference proteome</keyword>
<keyword id="KW-0804">Transcription</keyword>
<keyword id="KW-0808">Transferase</keyword>
<keyword id="KW-0862">Zinc</keyword>
<reference key="1">
    <citation type="submission" date="2006-01" db="EMBL/GenBank/DDBJ databases">
        <title>Complete sequence of Rhodopseudomonas palustris HaA2.</title>
        <authorList>
            <consortium name="US DOE Joint Genome Institute"/>
            <person name="Copeland A."/>
            <person name="Lucas S."/>
            <person name="Lapidus A."/>
            <person name="Barry K."/>
            <person name="Detter J.C."/>
            <person name="Glavina T."/>
            <person name="Hammon N."/>
            <person name="Israni S."/>
            <person name="Pitluck S."/>
            <person name="Chain P."/>
            <person name="Malfatti S."/>
            <person name="Shin M."/>
            <person name="Vergez L."/>
            <person name="Schmutz J."/>
            <person name="Larimer F."/>
            <person name="Land M."/>
            <person name="Hauser L."/>
            <person name="Pelletier D.A."/>
            <person name="Kyrpides N."/>
            <person name="Anderson I."/>
            <person name="Oda Y."/>
            <person name="Harwood C.S."/>
            <person name="Richardson P."/>
        </authorList>
    </citation>
    <scope>NUCLEOTIDE SEQUENCE [LARGE SCALE GENOMIC DNA]</scope>
    <source>
        <strain>HaA2</strain>
    </source>
</reference>
<proteinExistence type="inferred from homology"/>
<organism>
    <name type="scientific">Rhodopseudomonas palustris (strain HaA2)</name>
    <dbReference type="NCBI Taxonomy" id="316058"/>
    <lineage>
        <taxon>Bacteria</taxon>
        <taxon>Pseudomonadati</taxon>
        <taxon>Pseudomonadota</taxon>
        <taxon>Alphaproteobacteria</taxon>
        <taxon>Hyphomicrobiales</taxon>
        <taxon>Nitrobacteraceae</taxon>
        <taxon>Rhodopseudomonas</taxon>
    </lineage>
</organism>
<gene>
    <name evidence="1" type="primary">rpoC</name>
    <name type="ordered locus">RPB_2286</name>
</gene>
<name>RPOC_RHOP2</name>
<protein>
    <recommendedName>
        <fullName evidence="1">DNA-directed RNA polymerase subunit beta'</fullName>
        <shortName evidence="1">RNAP subunit beta'</shortName>
        <ecNumber evidence="1">2.7.7.6</ecNumber>
    </recommendedName>
    <alternativeName>
        <fullName evidence="1">RNA polymerase subunit beta'</fullName>
    </alternativeName>
    <alternativeName>
        <fullName evidence="1">Transcriptase subunit beta'</fullName>
    </alternativeName>
</protein>